<name>RL32_PROMT</name>
<comment type="similarity">
    <text evidence="1">Belongs to the bacterial ribosomal protein bL32 family.</text>
</comment>
<sequence length="59" mass="6389">MAVPKKKTSKGKRNQRHATWKGKAAVAAEKALSIGKSVLTGRAQGFVYPMNETSEEEAD</sequence>
<keyword id="KW-1185">Reference proteome</keyword>
<keyword id="KW-0687">Ribonucleoprotein</keyword>
<keyword id="KW-0689">Ribosomal protein</keyword>
<reference key="1">
    <citation type="journal article" date="2007" name="PLoS Genet.">
        <title>Patterns and implications of gene gain and loss in the evolution of Prochlorococcus.</title>
        <authorList>
            <person name="Kettler G.C."/>
            <person name="Martiny A.C."/>
            <person name="Huang K."/>
            <person name="Zucker J."/>
            <person name="Coleman M.L."/>
            <person name="Rodrigue S."/>
            <person name="Chen F."/>
            <person name="Lapidus A."/>
            <person name="Ferriera S."/>
            <person name="Johnson J."/>
            <person name="Steglich C."/>
            <person name="Church G.M."/>
            <person name="Richardson P."/>
            <person name="Chisholm S.W."/>
        </authorList>
    </citation>
    <scope>NUCLEOTIDE SEQUENCE [LARGE SCALE GENOMIC DNA]</scope>
    <source>
        <strain>NATL2A</strain>
    </source>
</reference>
<gene>
    <name evidence="1" type="primary">rpmF</name>
    <name evidence="1" type="synonym">rpl32</name>
    <name type="ordered locus">PMN2A_0354</name>
</gene>
<protein>
    <recommendedName>
        <fullName evidence="1">Large ribosomal subunit protein bL32</fullName>
    </recommendedName>
    <alternativeName>
        <fullName evidence="3">50S ribosomal protein L32</fullName>
    </alternativeName>
</protein>
<feature type="chain" id="PRO_0000225749" description="Large ribosomal subunit protein bL32">
    <location>
        <begin position="1"/>
        <end position="59"/>
    </location>
</feature>
<feature type="region of interest" description="Disordered" evidence="2">
    <location>
        <begin position="1"/>
        <end position="22"/>
    </location>
</feature>
<feature type="compositionally biased region" description="Basic residues" evidence="2">
    <location>
        <begin position="1"/>
        <end position="20"/>
    </location>
</feature>
<proteinExistence type="inferred from homology"/>
<accession>Q46KY2</accession>
<organism>
    <name type="scientific">Prochlorococcus marinus (strain NATL2A)</name>
    <dbReference type="NCBI Taxonomy" id="59920"/>
    <lineage>
        <taxon>Bacteria</taxon>
        <taxon>Bacillati</taxon>
        <taxon>Cyanobacteriota</taxon>
        <taxon>Cyanophyceae</taxon>
        <taxon>Synechococcales</taxon>
        <taxon>Prochlorococcaceae</taxon>
        <taxon>Prochlorococcus</taxon>
    </lineage>
</organism>
<dbReference type="EMBL" id="CP000095">
    <property type="protein sequence ID" value="AAZ57846.1"/>
    <property type="molecule type" value="Genomic_DNA"/>
</dbReference>
<dbReference type="RefSeq" id="WP_011293888.1">
    <property type="nucleotide sequence ID" value="NC_007335.2"/>
</dbReference>
<dbReference type="SMR" id="Q46KY2"/>
<dbReference type="STRING" id="59920.PMN2A_0354"/>
<dbReference type="KEGG" id="pmn:PMN2A_0354"/>
<dbReference type="HOGENOM" id="CLU_199882_0_0_3"/>
<dbReference type="OrthoDB" id="541730at2"/>
<dbReference type="PhylomeDB" id="Q46KY2"/>
<dbReference type="Proteomes" id="UP000002535">
    <property type="component" value="Chromosome"/>
</dbReference>
<dbReference type="GO" id="GO:0015934">
    <property type="term" value="C:large ribosomal subunit"/>
    <property type="evidence" value="ECO:0007669"/>
    <property type="project" value="InterPro"/>
</dbReference>
<dbReference type="GO" id="GO:0003735">
    <property type="term" value="F:structural constituent of ribosome"/>
    <property type="evidence" value="ECO:0007669"/>
    <property type="project" value="InterPro"/>
</dbReference>
<dbReference type="GO" id="GO:0006412">
    <property type="term" value="P:translation"/>
    <property type="evidence" value="ECO:0007669"/>
    <property type="project" value="UniProtKB-UniRule"/>
</dbReference>
<dbReference type="Gene3D" id="1.20.5.640">
    <property type="entry name" value="Single helix bin"/>
    <property type="match status" value="1"/>
</dbReference>
<dbReference type="HAMAP" id="MF_00340">
    <property type="entry name" value="Ribosomal_bL32"/>
    <property type="match status" value="1"/>
</dbReference>
<dbReference type="InterPro" id="IPR002677">
    <property type="entry name" value="Ribosomal_bL32"/>
</dbReference>
<dbReference type="InterPro" id="IPR044958">
    <property type="entry name" value="Ribosomal_bL32_plant/cyanobact"/>
</dbReference>
<dbReference type="InterPro" id="IPR011332">
    <property type="entry name" value="Ribosomal_zn-bd"/>
</dbReference>
<dbReference type="NCBIfam" id="TIGR01031">
    <property type="entry name" value="rpmF_bact"/>
    <property type="match status" value="1"/>
</dbReference>
<dbReference type="PANTHER" id="PTHR36083">
    <property type="entry name" value="50S RIBOSOMAL PROTEIN L32, CHLOROPLASTIC"/>
    <property type="match status" value="1"/>
</dbReference>
<dbReference type="PANTHER" id="PTHR36083:SF1">
    <property type="entry name" value="LARGE RIBOSOMAL SUBUNIT PROTEIN BL32C"/>
    <property type="match status" value="1"/>
</dbReference>
<dbReference type="Pfam" id="PF01783">
    <property type="entry name" value="Ribosomal_L32p"/>
    <property type="match status" value="1"/>
</dbReference>
<dbReference type="SUPFAM" id="SSF57829">
    <property type="entry name" value="Zn-binding ribosomal proteins"/>
    <property type="match status" value="1"/>
</dbReference>
<evidence type="ECO:0000255" key="1">
    <source>
        <dbReference type="HAMAP-Rule" id="MF_00340"/>
    </source>
</evidence>
<evidence type="ECO:0000256" key="2">
    <source>
        <dbReference type="SAM" id="MobiDB-lite"/>
    </source>
</evidence>
<evidence type="ECO:0000305" key="3"/>